<proteinExistence type="predicted"/>
<organism>
    <name type="scientific">Caenorhabditis elegans</name>
    <dbReference type="NCBI Taxonomy" id="6239"/>
    <lineage>
        <taxon>Eukaryota</taxon>
        <taxon>Metazoa</taxon>
        <taxon>Ecdysozoa</taxon>
        <taxon>Nematoda</taxon>
        <taxon>Chromadorea</taxon>
        <taxon>Rhabditida</taxon>
        <taxon>Rhabditina</taxon>
        <taxon>Rhabditomorpha</taxon>
        <taxon>Rhabditoidea</taxon>
        <taxon>Rhabditidae</taxon>
        <taxon>Peloderinae</taxon>
        <taxon>Caenorhabditis</taxon>
    </lineage>
</organism>
<dbReference type="EMBL" id="FO080723">
    <property type="protein sequence ID" value="CCD66165.1"/>
    <property type="molecule type" value="Genomic_DNA"/>
</dbReference>
<dbReference type="PIR" id="S44895">
    <property type="entry name" value="S44895"/>
</dbReference>
<dbReference type="RefSeq" id="NP_001033387.1">
    <property type="nucleotide sequence ID" value="NM_001038298.4"/>
</dbReference>
<dbReference type="BioGRID" id="56067">
    <property type="interactions" value="3"/>
</dbReference>
<dbReference type="FunCoup" id="P34621">
    <property type="interactions" value="244"/>
</dbReference>
<dbReference type="PaxDb" id="6239-ZK1236.5"/>
<dbReference type="PeptideAtlas" id="P34621"/>
<dbReference type="EnsemblMetazoa" id="ZK1236.5.1">
    <property type="protein sequence ID" value="ZK1236.5.1"/>
    <property type="gene ID" value="WBGene00022864"/>
</dbReference>
<dbReference type="GeneID" id="191537"/>
<dbReference type="KEGG" id="cel:CELE_ZK1236.5"/>
<dbReference type="UCSC" id="ZK1236.5">
    <property type="organism name" value="c. elegans"/>
</dbReference>
<dbReference type="AGR" id="WB:WBGene00022864"/>
<dbReference type="CTD" id="191537"/>
<dbReference type="WormBase" id="ZK1236.5">
    <property type="protein sequence ID" value="CE38925"/>
    <property type="gene ID" value="WBGene00022864"/>
</dbReference>
<dbReference type="eggNOG" id="ENOG502S85Q">
    <property type="taxonomic scope" value="Eukaryota"/>
</dbReference>
<dbReference type="HOGENOM" id="CLU_1760492_0_0_1"/>
<dbReference type="InParanoid" id="P34621"/>
<dbReference type="OMA" id="MKCLATP"/>
<dbReference type="OrthoDB" id="5775818at2759"/>
<dbReference type="PRO" id="PR:P34621"/>
<dbReference type="Proteomes" id="UP000001940">
    <property type="component" value="Chromosome III"/>
</dbReference>
<dbReference type="Bgee" id="WBGene00022864">
    <property type="expression patterns" value="Expressed in germ line (C elegans) and 4 other cell types or tissues"/>
</dbReference>
<keyword id="KW-1185">Reference proteome</keyword>
<accession>P34621</accession>
<accession>Q45EM1</accession>
<accession>Q629J9</accession>
<gene>
    <name type="ORF">ZK1236.5</name>
</gene>
<reference key="1">
    <citation type="journal article" date="1994" name="Nature">
        <title>2.2 Mb of contiguous nucleotide sequence from chromosome III of C. elegans.</title>
        <authorList>
            <person name="Wilson R."/>
            <person name="Ainscough R."/>
            <person name="Anderson K."/>
            <person name="Baynes C."/>
            <person name="Berks M."/>
            <person name="Bonfield J."/>
            <person name="Burton J."/>
            <person name="Connell M."/>
            <person name="Copsey T."/>
            <person name="Cooper J."/>
            <person name="Coulson A."/>
            <person name="Craxton M."/>
            <person name="Dear S."/>
            <person name="Du Z."/>
            <person name="Durbin R."/>
            <person name="Favello A."/>
            <person name="Fraser A."/>
            <person name="Fulton L."/>
            <person name="Gardner A."/>
            <person name="Green P."/>
            <person name="Hawkins T."/>
            <person name="Hillier L."/>
            <person name="Jier M."/>
            <person name="Johnston L."/>
            <person name="Jones M."/>
            <person name="Kershaw J."/>
            <person name="Kirsten J."/>
            <person name="Laisster N."/>
            <person name="Latreille P."/>
            <person name="Lightning J."/>
            <person name="Lloyd C."/>
            <person name="Mortimore B."/>
            <person name="O'Callaghan M."/>
            <person name="Parsons J."/>
            <person name="Percy C."/>
            <person name="Rifken L."/>
            <person name="Roopra A."/>
            <person name="Saunders D."/>
            <person name="Shownkeen R."/>
            <person name="Sims M."/>
            <person name="Smaldon N."/>
            <person name="Smith A."/>
            <person name="Smith M."/>
            <person name="Sonnhammer E."/>
            <person name="Staden R."/>
            <person name="Sulston J."/>
            <person name="Thierry-Mieg J."/>
            <person name="Thomas K."/>
            <person name="Vaudin M."/>
            <person name="Vaughan K."/>
            <person name="Waterston R."/>
            <person name="Watson A."/>
            <person name="Weinstock L."/>
            <person name="Wilkinson-Sproat J."/>
            <person name="Wohldman P."/>
        </authorList>
    </citation>
    <scope>NUCLEOTIDE SEQUENCE [LARGE SCALE GENOMIC DNA]</scope>
    <source>
        <strain>Bristol N2</strain>
    </source>
</reference>
<reference key="2">
    <citation type="journal article" date="1998" name="Science">
        <title>Genome sequence of the nematode C. elegans: a platform for investigating biology.</title>
        <authorList>
            <consortium name="The C. elegans sequencing consortium"/>
        </authorList>
    </citation>
    <scope>NUCLEOTIDE SEQUENCE [LARGE SCALE GENOMIC DNA]</scope>
    <source>
        <strain>Bristol N2</strain>
    </source>
</reference>
<feature type="chain" id="PRO_0000065564" description="Uncharacterized protein ZK1236.5">
    <location>
        <begin position="1"/>
        <end position="148"/>
    </location>
</feature>
<feature type="region of interest" description="Disordered" evidence="1">
    <location>
        <begin position="97"/>
        <end position="126"/>
    </location>
</feature>
<feature type="compositionally biased region" description="Basic and acidic residues" evidence="1">
    <location>
        <begin position="97"/>
        <end position="112"/>
    </location>
</feature>
<sequence length="148" mass="17275">MQLSRALYRNLNTRHWNRRIWEVGYRGPILPQQKATGRPDYPVSANRVNILRERLAREQIVMNLLTRPYSTAYAELTYLETEKNVKSLEELRAKEYKKLDEQRMPGKPKNTEGSKSTIRKKANVGNLLHTHTTVEDSLAGLAARKRWD</sequence>
<name>YO85_CAEEL</name>
<protein>
    <recommendedName>
        <fullName>Uncharacterized protein ZK1236.5</fullName>
    </recommendedName>
</protein>
<evidence type="ECO:0000256" key="1">
    <source>
        <dbReference type="SAM" id="MobiDB-lite"/>
    </source>
</evidence>